<feature type="chain" id="PRO_0000245486" description="DnaJ homolog subfamily B member 1">
    <location>
        <begin position="1"/>
        <end position="340"/>
    </location>
</feature>
<feature type="domain" description="J" evidence="2">
    <location>
        <begin position="2"/>
        <end position="70"/>
    </location>
</feature>
<feature type="region of interest" description="Disordered" evidence="3">
    <location>
        <begin position="68"/>
        <end position="90"/>
    </location>
</feature>
<feature type="compositionally biased region" description="Gly residues" evidence="3">
    <location>
        <begin position="73"/>
        <end position="86"/>
    </location>
</feature>
<feature type="modified residue" description="Phosphothreonine" evidence="1">
    <location>
        <position position="307"/>
    </location>
</feature>
<dbReference type="EMBL" id="BC104503">
    <property type="protein sequence ID" value="AAI04504.1"/>
    <property type="molecule type" value="mRNA"/>
</dbReference>
<dbReference type="RefSeq" id="NP_001028935.1">
    <property type="nucleotide sequence ID" value="NM_001033763.1"/>
</dbReference>
<dbReference type="SMR" id="Q3MI00"/>
<dbReference type="FunCoup" id="Q3MI00">
    <property type="interactions" value="2173"/>
</dbReference>
<dbReference type="STRING" id="9913.ENSBTAP00000036132"/>
<dbReference type="PaxDb" id="9913-ENSBTAP00000036132"/>
<dbReference type="Ensembl" id="ENSBTAT00000036270.2">
    <property type="protein sequence ID" value="ENSBTAP00000036132.1"/>
    <property type="gene ID" value="ENSBTAG00000016874.5"/>
</dbReference>
<dbReference type="GeneID" id="538426"/>
<dbReference type="KEGG" id="bta:538426"/>
<dbReference type="CTD" id="3337"/>
<dbReference type="VEuPathDB" id="HostDB:ENSBTAG00000016874"/>
<dbReference type="VGNC" id="VGNC:112604">
    <property type="gene designation" value="DNAJB1"/>
</dbReference>
<dbReference type="eggNOG" id="KOG0714">
    <property type="taxonomic scope" value="Eukaryota"/>
</dbReference>
<dbReference type="GeneTree" id="ENSGT00940000160312"/>
<dbReference type="HOGENOM" id="CLU_017633_0_0_1"/>
<dbReference type="InParanoid" id="Q3MI00"/>
<dbReference type="OMA" id="TECTVNI"/>
<dbReference type="OrthoDB" id="550424at2759"/>
<dbReference type="TreeFam" id="TF105141"/>
<dbReference type="Reactome" id="R-BTA-3371453">
    <property type="pathway name" value="Regulation of HSF1-mediated heat shock response"/>
</dbReference>
<dbReference type="Reactome" id="R-BTA-3371497">
    <property type="pathway name" value="HSP90 chaperone cycle for steroid hormone receptors (SHR) in the presence of ligand"/>
</dbReference>
<dbReference type="Reactome" id="R-BTA-3371568">
    <property type="pathway name" value="Attenuation phase"/>
</dbReference>
<dbReference type="Reactome" id="R-BTA-3371571">
    <property type="pathway name" value="HSF1-dependent transactivation"/>
</dbReference>
<dbReference type="Reactome" id="R-BTA-5687128">
    <property type="pathway name" value="MAPK6/MAPK4 signaling"/>
</dbReference>
<dbReference type="Proteomes" id="UP000009136">
    <property type="component" value="Chromosome 7"/>
</dbReference>
<dbReference type="Bgee" id="ENSBTAG00000016874">
    <property type="expression patterns" value="Expressed in bone marrow and 104 other cell types or tissues"/>
</dbReference>
<dbReference type="GO" id="GO:0005829">
    <property type="term" value="C:cytosol"/>
    <property type="evidence" value="ECO:0000318"/>
    <property type="project" value="GO_Central"/>
</dbReference>
<dbReference type="GO" id="GO:0005730">
    <property type="term" value="C:nucleolus"/>
    <property type="evidence" value="ECO:0007669"/>
    <property type="project" value="UniProtKB-SubCell"/>
</dbReference>
<dbReference type="GO" id="GO:0005654">
    <property type="term" value="C:nucleoplasm"/>
    <property type="evidence" value="ECO:0007669"/>
    <property type="project" value="Ensembl"/>
</dbReference>
<dbReference type="GO" id="GO:0001671">
    <property type="term" value="F:ATPase activator activity"/>
    <property type="evidence" value="ECO:0000250"/>
    <property type="project" value="UniProtKB"/>
</dbReference>
<dbReference type="GO" id="GO:0051117">
    <property type="term" value="F:ATPase binding"/>
    <property type="evidence" value="ECO:0007669"/>
    <property type="project" value="Ensembl"/>
</dbReference>
<dbReference type="GO" id="GO:0030544">
    <property type="term" value="F:Hsp70 protein binding"/>
    <property type="evidence" value="ECO:0000318"/>
    <property type="project" value="GO_Central"/>
</dbReference>
<dbReference type="GO" id="GO:0044183">
    <property type="term" value="F:protein folding chaperone"/>
    <property type="evidence" value="ECO:0007669"/>
    <property type="project" value="Ensembl"/>
</dbReference>
<dbReference type="GO" id="GO:0003714">
    <property type="term" value="F:transcription corepressor activity"/>
    <property type="evidence" value="ECO:0000250"/>
    <property type="project" value="UniProtKB"/>
</dbReference>
<dbReference type="GO" id="GO:0140416">
    <property type="term" value="F:transcription regulator inhibitor activity"/>
    <property type="evidence" value="ECO:0007669"/>
    <property type="project" value="Ensembl"/>
</dbReference>
<dbReference type="GO" id="GO:0051082">
    <property type="term" value="F:unfolded protein binding"/>
    <property type="evidence" value="ECO:0000318"/>
    <property type="project" value="GO_Central"/>
</dbReference>
<dbReference type="GO" id="GO:0034605">
    <property type="term" value="P:cellular response to heat"/>
    <property type="evidence" value="ECO:0007669"/>
    <property type="project" value="Ensembl"/>
</dbReference>
<dbReference type="GO" id="GO:0051085">
    <property type="term" value="P:chaperone cofactor-dependent protein refolding"/>
    <property type="evidence" value="ECO:0000318"/>
    <property type="project" value="GO_Central"/>
</dbReference>
<dbReference type="GO" id="GO:0090084">
    <property type="term" value="P:negative regulation of inclusion body assembly"/>
    <property type="evidence" value="ECO:0007669"/>
    <property type="project" value="Ensembl"/>
</dbReference>
<dbReference type="GO" id="GO:0000122">
    <property type="term" value="P:negative regulation of transcription by RNA polymerase II"/>
    <property type="evidence" value="ECO:0000250"/>
    <property type="project" value="UniProtKB"/>
</dbReference>
<dbReference type="CDD" id="cd06257">
    <property type="entry name" value="DnaJ"/>
    <property type="match status" value="1"/>
</dbReference>
<dbReference type="CDD" id="cd10747">
    <property type="entry name" value="DnaJ_C"/>
    <property type="match status" value="1"/>
</dbReference>
<dbReference type="FunFam" id="1.10.287.110:FF:000005">
    <property type="entry name" value="DnaJ (Hsp40) homolog, subfamily B, member 4"/>
    <property type="match status" value="1"/>
</dbReference>
<dbReference type="FunFam" id="2.60.260.20:FF:000002">
    <property type="entry name" value="Dnaj homolog subfamily b member"/>
    <property type="match status" value="1"/>
</dbReference>
<dbReference type="FunFam" id="2.60.260.20:FF:000007">
    <property type="entry name" value="dnaJ homolog subfamily B member 5"/>
    <property type="match status" value="1"/>
</dbReference>
<dbReference type="Gene3D" id="1.10.287.110">
    <property type="entry name" value="DnaJ domain"/>
    <property type="match status" value="1"/>
</dbReference>
<dbReference type="Gene3D" id="2.60.260.20">
    <property type="entry name" value="Urease metallochaperone UreE, N-terminal domain"/>
    <property type="match status" value="2"/>
</dbReference>
<dbReference type="InterPro" id="IPR002939">
    <property type="entry name" value="DnaJ_C"/>
</dbReference>
<dbReference type="InterPro" id="IPR001623">
    <property type="entry name" value="DnaJ_domain"/>
</dbReference>
<dbReference type="InterPro" id="IPR018253">
    <property type="entry name" value="DnaJ_domain_CS"/>
</dbReference>
<dbReference type="InterPro" id="IPR051339">
    <property type="entry name" value="DnaJ_subfamily_B"/>
</dbReference>
<dbReference type="InterPro" id="IPR008971">
    <property type="entry name" value="HSP40/DnaJ_pept-bd"/>
</dbReference>
<dbReference type="InterPro" id="IPR036869">
    <property type="entry name" value="J_dom_sf"/>
</dbReference>
<dbReference type="PANTHER" id="PTHR24078:SF568">
    <property type="entry name" value="DNAJ HOMOLOG SUBFAMILY B MEMBER 1"/>
    <property type="match status" value="1"/>
</dbReference>
<dbReference type="PANTHER" id="PTHR24078">
    <property type="entry name" value="DNAJ HOMOLOG SUBFAMILY C MEMBER"/>
    <property type="match status" value="1"/>
</dbReference>
<dbReference type="Pfam" id="PF00226">
    <property type="entry name" value="DnaJ"/>
    <property type="match status" value="1"/>
</dbReference>
<dbReference type="Pfam" id="PF01556">
    <property type="entry name" value="DnaJ_C"/>
    <property type="match status" value="1"/>
</dbReference>
<dbReference type="PRINTS" id="PR00625">
    <property type="entry name" value="JDOMAIN"/>
</dbReference>
<dbReference type="SMART" id="SM00271">
    <property type="entry name" value="DnaJ"/>
    <property type="match status" value="1"/>
</dbReference>
<dbReference type="SUPFAM" id="SSF46565">
    <property type="entry name" value="Chaperone J-domain"/>
    <property type="match status" value="1"/>
</dbReference>
<dbReference type="SUPFAM" id="SSF49493">
    <property type="entry name" value="HSP40/DnaJ peptide-binding domain"/>
    <property type="match status" value="2"/>
</dbReference>
<dbReference type="PROSITE" id="PS00636">
    <property type="entry name" value="DNAJ_1"/>
    <property type="match status" value="1"/>
</dbReference>
<dbReference type="PROSITE" id="PS50076">
    <property type="entry name" value="DNAJ_2"/>
    <property type="match status" value="1"/>
</dbReference>
<reference key="1">
    <citation type="submission" date="2005-09" db="EMBL/GenBank/DDBJ databases">
        <authorList>
            <consortium name="NIH - Mammalian Gene Collection (MGC) project"/>
        </authorList>
    </citation>
    <scope>NUCLEOTIDE SEQUENCE [LARGE SCALE MRNA]</scope>
    <source>
        <strain>Hereford</strain>
        <tissue>Ascending colon</tissue>
    </source>
</reference>
<sequence>MGKDYYQTLGLARGASDEEIKRAYRRQALRYHPDKNKEPGAEEKFKEIAEAYDVLSDPRKREIFDRYGEEGLKGSGPSGGSSGGTNGTSFSYTFHGDPHAMFAEFFGGRNPFDNFFGQRNGEEGMDIDDPFSGFPMGMGGFTNMNFGRSRPAQEPTRKKQDPPVTHDLRVSLEEIYSGCTKKMKISHKRLNPDGKSIRNEDKILTIEVKRGWKEGTKITFPKEGDQTSNNIPADIVFVLKDKPHNIFKRDGSDVIYPARISLREALCGCTVNVPTLDGRTIPVVFKDVIRPGMRRKVPGEGLPLPKTPEKRGDLIIEFEVIFPERIPQTSRTVLEQVLPI</sequence>
<evidence type="ECO:0000250" key="1">
    <source>
        <dbReference type="UniProtKB" id="P25685"/>
    </source>
</evidence>
<evidence type="ECO:0000255" key="2">
    <source>
        <dbReference type="PROSITE-ProRule" id="PRU00286"/>
    </source>
</evidence>
<evidence type="ECO:0000256" key="3">
    <source>
        <dbReference type="SAM" id="MobiDB-lite"/>
    </source>
</evidence>
<organism>
    <name type="scientific">Bos taurus</name>
    <name type="common">Bovine</name>
    <dbReference type="NCBI Taxonomy" id="9913"/>
    <lineage>
        <taxon>Eukaryota</taxon>
        <taxon>Metazoa</taxon>
        <taxon>Chordata</taxon>
        <taxon>Craniata</taxon>
        <taxon>Vertebrata</taxon>
        <taxon>Euteleostomi</taxon>
        <taxon>Mammalia</taxon>
        <taxon>Eutheria</taxon>
        <taxon>Laurasiatheria</taxon>
        <taxon>Artiodactyla</taxon>
        <taxon>Ruminantia</taxon>
        <taxon>Pecora</taxon>
        <taxon>Bovidae</taxon>
        <taxon>Bovinae</taxon>
        <taxon>Bos</taxon>
    </lineage>
</organism>
<gene>
    <name type="primary">DNAJB1</name>
</gene>
<name>DNJB1_BOVIN</name>
<accession>Q3MI00</accession>
<comment type="function">
    <text evidence="1">Interacts with HSP70 and can stimulate its ATPase activity. Stimulates the association between HSC70 and HIP. Negatively regulates heat shock-induced HSF1 transcriptional activity during the attenuation and recovery phase period of the heat shock response. Stimulates ATP hydrolysis and the folding of unfolded proteins mediated by HSPA1A/B (in vitro).</text>
</comment>
<comment type="subunit">
    <text evidence="1">Interacts with DNAJC3. Interacts with HSF1 (via transactivation domain); this interaction results in the inhibition of heat shock- and HSF1-induced transcriptional activity during the attenuation and recovery phase period of the heat shock response. Interacts with BAG3.</text>
</comment>
<comment type="subcellular location">
    <subcellularLocation>
        <location evidence="1">Cytoplasm</location>
    </subcellularLocation>
    <subcellularLocation>
        <location evidence="1">Nucleus</location>
    </subcellularLocation>
    <subcellularLocation>
        <location evidence="1">Nucleus</location>
        <location evidence="1">Nucleolus</location>
    </subcellularLocation>
    <text evidence="1">Translocates rapidly from the cytoplasm to the nucleus, and especially to the nucleoli, upon heat shock.</text>
</comment>
<keyword id="KW-0143">Chaperone</keyword>
<keyword id="KW-0963">Cytoplasm</keyword>
<keyword id="KW-0539">Nucleus</keyword>
<keyword id="KW-0597">Phosphoprotein</keyword>
<keyword id="KW-1185">Reference proteome</keyword>
<keyword id="KW-0346">Stress response</keyword>
<proteinExistence type="evidence at transcript level"/>
<protein>
    <recommendedName>
        <fullName>DnaJ homolog subfamily B member 1</fullName>
    </recommendedName>
</protein>